<name>RSMG_BREBN</name>
<comment type="function">
    <text evidence="1">Specifically methylates the N7 position of guanine in position 535 of 16S rRNA.</text>
</comment>
<comment type="subcellular location">
    <subcellularLocation>
        <location evidence="1">Cytoplasm</location>
    </subcellularLocation>
</comment>
<comment type="similarity">
    <text evidence="1">Belongs to the methyltransferase superfamily. RNA methyltransferase RsmG family.</text>
</comment>
<dbReference type="EC" id="2.1.1.-" evidence="1"/>
<dbReference type="EMBL" id="AP008955">
    <property type="protein sequence ID" value="BAH46917.1"/>
    <property type="molecule type" value="Genomic_DNA"/>
</dbReference>
<dbReference type="RefSeq" id="WP_015894097.1">
    <property type="nucleotide sequence ID" value="NC_012491.1"/>
</dbReference>
<dbReference type="SMR" id="C0ZA63"/>
<dbReference type="STRING" id="358681.BBR47_59400"/>
<dbReference type="KEGG" id="bbe:BBR47_59400"/>
<dbReference type="eggNOG" id="COG0357">
    <property type="taxonomic scope" value="Bacteria"/>
</dbReference>
<dbReference type="HOGENOM" id="CLU_065341_0_0_9"/>
<dbReference type="Proteomes" id="UP000001877">
    <property type="component" value="Chromosome"/>
</dbReference>
<dbReference type="GO" id="GO:0005829">
    <property type="term" value="C:cytosol"/>
    <property type="evidence" value="ECO:0007669"/>
    <property type="project" value="TreeGrafter"/>
</dbReference>
<dbReference type="GO" id="GO:0070043">
    <property type="term" value="F:rRNA (guanine-N7-)-methyltransferase activity"/>
    <property type="evidence" value="ECO:0007669"/>
    <property type="project" value="UniProtKB-UniRule"/>
</dbReference>
<dbReference type="CDD" id="cd02440">
    <property type="entry name" value="AdoMet_MTases"/>
    <property type="match status" value="1"/>
</dbReference>
<dbReference type="FunFam" id="3.40.50.150:FF:000041">
    <property type="entry name" value="Ribosomal RNA small subunit methyltransferase G"/>
    <property type="match status" value="1"/>
</dbReference>
<dbReference type="Gene3D" id="3.40.50.150">
    <property type="entry name" value="Vaccinia Virus protein VP39"/>
    <property type="match status" value="1"/>
</dbReference>
<dbReference type="HAMAP" id="MF_00074">
    <property type="entry name" value="16SrRNA_methyltr_G"/>
    <property type="match status" value="1"/>
</dbReference>
<dbReference type="InterPro" id="IPR003682">
    <property type="entry name" value="rRNA_ssu_MeTfrase_G"/>
</dbReference>
<dbReference type="InterPro" id="IPR029063">
    <property type="entry name" value="SAM-dependent_MTases_sf"/>
</dbReference>
<dbReference type="NCBIfam" id="TIGR00138">
    <property type="entry name" value="rsmG_gidB"/>
    <property type="match status" value="1"/>
</dbReference>
<dbReference type="PANTHER" id="PTHR31760">
    <property type="entry name" value="S-ADENOSYL-L-METHIONINE-DEPENDENT METHYLTRANSFERASES SUPERFAMILY PROTEIN"/>
    <property type="match status" value="1"/>
</dbReference>
<dbReference type="PANTHER" id="PTHR31760:SF0">
    <property type="entry name" value="S-ADENOSYL-L-METHIONINE-DEPENDENT METHYLTRANSFERASES SUPERFAMILY PROTEIN"/>
    <property type="match status" value="1"/>
</dbReference>
<dbReference type="Pfam" id="PF02527">
    <property type="entry name" value="GidB"/>
    <property type="match status" value="1"/>
</dbReference>
<dbReference type="PIRSF" id="PIRSF003078">
    <property type="entry name" value="GidB"/>
    <property type="match status" value="1"/>
</dbReference>
<dbReference type="SUPFAM" id="SSF53335">
    <property type="entry name" value="S-adenosyl-L-methionine-dependent methyltransferases"/>
    <property type="match status" value="1"/>
</dbReference>
<accession>C0ZA63</accession>
<sequence length="238" mass="26738">MTKEQFAEVLAAQGISLTDRQKEQFDHFFRLLVEWNEKMNLTGITEEGQVYNKHFYDSITPAFYFPFDQVQSVVDIGGGAGFPSIPLKICFPHLKMTIIDSLNKRMSFLQHVAKELGLENVNPVHGRAEDRGQEAMYREKFDLVVARAVARLNLLSEFCLPFAKVGGHFVALKGAEITPELAEAKKAIKTLGGKTRKVETFQLLEEAGERNIVIMEKIEATPKSYPRKAGVPAKKPLV</sequence>
<gene>
    <name evidence="1" type="primary">rsmG</name>
    <name type="ordered locus">BBR47_59400</name>
</gene>
<feature type="chain" id="PRO_1000190217" description="Ribosomal RNA small subunit methyltransferase G">
    <location>
        <begin position="1"/>
        <end position="238"/>
    </location>
</feature>
<feature type="binding site" evidence="1">
    <location>
        <position position="77"/>
    </location>
    <ligand>
        <name>S-adenosyl-L-methionine</name>
        <dbReference type="ChEBI" id="CHEBI:59789"/>
    </ligand>
</feature>
<feature type="binding site" evidence="1">
    <location>
        <position position="82"/>
    </location>
    <ligand>
        <name>S-adenosyl-L-methionine</name>
        <dbReference type="ChEBI" id="CHEBI:59789"/>
    </ligand>
</feature>
<feature type="binding site" evidence="1">
    <location>
        <begin position="128"/>
        <end position="129"/>
    </location>
    <ligand>
        <name>S-adenosyl-L-methionine</name>
        <dbReference type="ChEBI" id="CHEBI:59789"/>
    </ligand>
</feature>
<feature type="binding site" evidence="1">
    <location>
        <position position="147"/>
    </location>
    <ligand>
        <name>S-adenosyl-L-methionine</name>
        <dbReference type="ChEBI" id="CHEBI:59789"/>
    </ligand>
</feature>
<keyword id="KW-0963">Cytoplasm</keyword>
<keyword id="KW-0489">Methyltransferase</keyword>
<keyword id="KW-1185">Reference proteome</keyword>
<keyword id="KW-0698">rRNA processing</keyword>
<keyword id="KW-0949">S-adenosyl-L-methionine</keyword>
<keyword id="KW-0808">Transferase</keyword>
<organism>
    <name type="scientific">Brevibacillus brevis (strain 47 / JCM 6285 / NBRC 100599)</name>
    <dbReference type="NCBI Taxonomy" id="358681"/>
    <lineage>
        <taxon>Bacteria</taxon>
        <taxon>Bacillati</taxon>
        <taxon>Bacillota</taxon>
        <taxon>Bacilli</taxon>
        <taxon>Bacillales</taxon>
        <taxon>Paenibacillaceae</taxon>
        <taxon>Brevibacillus</taxon>
    </lineage>
</organism>
<reference key="1">
    <citation type="submission" date="2005-03" db="EMBL/GenBank/DDBJ databases">
        <title>Brevibacillus brevis strain 47, complete genome.</title>
        <authorList>
            <person name="Hosoyama A."/>
            <person name="Yamada R."/>
            <person name="Hongo Y."/>
            <person name="Terui Y."/>
            <person name="Ankai A."/>
            <person name="Masuyama W."/>
            <person name="Sekiguchi M."/>
            <person name="Takeda T."/>
            <person name="Asano K."/>
            <person name="Ohji S."/>
            <person name="Ichikawa N."/>
            <person name="Narita S."/>
            <person name="Aoki N."/>
            <person name="Miura H."/>
            <person name="Matsushita S."/>
            <person name="Sekigawa T."/>
            <person name="Yamagata H."/>
            <person name="Yoshikawa H."/>
            <person name="Udaka S."/>
            <person name="Tanikawa S."/>
            <person name="Fujita N."/>
        </authorList>
    </citation>
    <scope>NUCLEOTIDE SEQUENCE [LARGE SCALE GENOMIC DNA]</scope>
    <source>
        <strain>47 / JCM 6285 / NBRC 100599</strain>
    </source>
</reference>
<evidence type="ECO:0000255" key="1">
    <source>
        <dbReference type="HAMAP-Rule" id="MF_00074"/>
    </source>
</evidence>
<protein>
    <recommendedName>
        <fullName evidence="1">Ribosomal RNA small subunit methyltransferase G</fullName>
        <ecNumber evidence="1">2.1.1.-</ecNumber>
    </recommendedName>
    <alternativeName>
        <fullName evidence="1">16S rRNA 7-methylguanosine methyltransferase</fullName>
        <shortName evidence="1">16S rRNA m7G methyltransferase</shortName>
    </alternativeName>
</protein>
<proteinExistence type="inferred from homology"/>